<feature type="chain" id="PRO_0000424139" description="UDP-Gal:alpha-D-GlcNAc-diphosphoundecaprenol beta-1,3-galactosyltransferase">
    <location>
        <begin position="1"/>
        <end position="275"/>
    </location>
</feature>
<dbReference type="EC" id="2.4.1.303" evidence="1 2"/>
<dbReference type="EMBL" id="AF125322">
    <property type="protein sequence ID" value="AAC27537.1"/>
    <property type="molecule type" value="Genomic_DNA"/>
</dbReference>
<dbReference type="PIR" id="B40630">
    <property type="entry name" value="B40630"/>
</dbReference>
<dbReference type="RefSeq" id="WP_001278665.1">
    <property type="nucleotide sequence ID" value="NZ_WVVU01000003.1"/>
</dbReference>
<dbReference type="SMR" id="Q03084"/>
<dbReference type="CAZy" id="GT2">
    <property type="family name" value="Glycosyltransferase Family 2"/>
</dbReference>
<dbReference type="KEGG" id="ag:AAC27537"/>
<dbReference type="PATRIC" id="fig|562.10476.peg.4398"/>
<dbReference type="BioCyc" id="MetaCyc:MONOMER-21487"/>
<dbReference type="BRENDA" id="2.4.1.303">
    <property type="organism ID" value="2026"/>
</dbReference>
<dbReference type="UniPathway" id="UPA00281"/>
<dbReference type="GO" id="GO:0005886">
    <property type="term" value="C:plasma membrane"/>
    <property type="evidence" value="ECO:0007669"/>
    <property type="project" value="UniProtKB-SubCell"/>
</dbReference>
<dbReference type="GO" id="GO:0016757">
    <property type="term" value="F:glycosyltransferase activity"/>
    <property type="evidence" value="ECO:0007669"/>
    <property type="project" value="UniProtKB-KW"/>
</dbReference>
<dbReference type="GO" id="GO:0009243">
    <property type="term" value="P:O antigen biosynthetic process"/>
    <property type="evidence" value="ECO:0007669"/>
    <property type="project" value="UniProtKB-UniPathway"/>
</dbReference>
<dbReference type="CDD" id="cd04195">
    <property type="entry name" value="GT2_AmsE_like"/>
    <property type="match status" value="1"/>
</dbReference>
<dbReference type="Gene3D" id="3.90.550.10">
    <property type="entry name" value="Spore Coat Polysaccharide Biosynthesis Protein SpsA, Chain A"/>
    <property type="match status" value="1"/>
</dbReference>
<dbReference type="InterPro" id="IPR001173">
    <property type="entry name" value="Glyco_trans_2-like"/>
</dbReference>
<dbReference type="InterPro" id="IPR050834">
    <property type="entry name" value="Glycosyltransf_2"/>
</dbReference>
<dbReference type="InterPro" id="IPR029044">
    <property type="entry name" value="Nucleotide-diphossugar_trans"/>
</dbReference>
<dbReference type="PANTHER" id="PTHR43685">
    <property type="entry name" value="GLYCOSYLTRANSFERASE"/>
    <property type="match status" value="1"/>
</dbReference>
<dbReference type="PANTHER" id="PTHR43685:SF5">
    <property type="entry name" value="GLYCOSYLTRANSFERASE EPSE-RELATED"/>
    <property type="match status" value="1"/>
</dbReference>
<dbReference type="Pfam" id="PF00535">
    <property type="entry name" value="Glycos_transf_2"/>
    <property type="match status" value="1"/>
</dbReference>
<dbReference type="SUPFAM" id="SSF53448">
    <property type="entry name" value="Nucleotide-diphospho-sugar transferases"/>
    <property type="match status" value="1"/>
</dbReference>
<name>WBBD_ECOLX</name>
<keyword id="KW-0997">Cell inner membrane</keyword>
<keyword id="KW-1003">Cell membrane</keyword>
<keyword id="KW-0328">Glycosyltransferase</keyword>
<keyword id="KW-0448">Lipopolysaccharide biosynthesis</keyword>
<keyword id="KW-0464">Manganese</keyword>
<keyword id="KW-0472">Membrane</keyword>
<keyword id="KW-0808">Transferase</keyword>
<gene>
    <name type="primary">wbbD</name>
</gene>
<organism>
    <name type="scientific">Escherichia coli</name>
    <dbReference type="NCBI Taxonomy" id="562"/>
    <lineage>
        <taxon>Bacteria</taxon>
        <taxon>Pseudomonadati</taxon>
        <taxon>Pseudomonadota</taxon>
        <taxon>Gammaproteobacteria</taxon>
        <taxon>Enterobacterales</taxon>
        <taxon>Enterobacteriaceae</taxon>
        <taxon>Escherichia</taxon>
    </lineage>
</organism>
<reference key="1">
    <citation type="journal article" date="1993" name="J. Bacteriol.">
        <title>Identification, expression, and DNA sequence of the GDP-mannose biosynthesis genes encoded by the O7 rfb gene cluster of strain VW187 (Escherichia coli O7:K1).</title>
        <authorList>
            <person name="Marolda C.L."/>
            <person name="Valvano M.A."/>
        </authorList>
    </citation>
    <scope>NUCLEOTIDE SEQUENCE [GENOMIC DNA]</scope>
    <source>
        <strain>O7:K1 / VW187</strain>
    </source>
</reference>
<reference key="2">
    <citation type="journal article" date="1999" name="Microbiology">
        <title>Genetic organization of the O7-specific lipopolysaccharide biosynthesis cluster of Escherichia coli VW187 (O7:K1).</title>
        <authorList>
            <person name="Marolda C.L."/>
            <person name="Feldman M.F."/>
            <person name="Valvano M.A."/>
        </authorList>
    </citation>
    <scope>NUCLEOTIDE SEQUENCE [GENOMIC DNA]</scope>
    <scope>GENE NAME</scope>
    <source>
        <strain>O7:K1 / VW187</strain>
    </source>
</reference>
<reference key="3">
    <citation type="journal article" date="2005" name="Glycobiology">
        <title>The wbbD gene of E. coli strain VW187 (O7:K1) encodes a UDP-Gal: GlcNAc{alpha}-pyrophosphate-R {beta}1,3-galactosyltransferase involved in the biosynthesis of O7-specific lipopolysaccharide.</title>
        <authorList>
            <person name="Riley J.G."/>
            <person name="Menggad M."/>
            <person name="Montoya-Peleaz P.J."/>
            <person name="Szarek W.A."/>
            <person name="Marolda C.L."/>
            <person name="Valvano M.A."/>
            <person name="Schutzbach J.S."/>
            <person name="Brockhausen I."/>
        </authorList>
    </citation>
    <scope>FUNCTION</scope>
    <scope>CATALYTIC ACTIVITY</scope>
    <scope>COFACTOR</scope>
    <scope>BIOPHYSICOCHEMICAL PROPERTIES</scope>
    <scope>PATHWAY</scope>
    <scope>SUBCELLULAR LOCATION</scope>
    <source>
        <strain>O7:K1 / VW187</strain>
    </source>
</reference>
<reference key="4">
    <citation type="journal article" date="2008" name="Glycoconj. J.">
        <title>Acceptor substrate specificity of UDP-Gal: GlcNAc-R beta1,3-galactosyltransferase (WbbD) from Escherichia coli O7:K1.</title>
        <authorList>
            <person name="Brockhausen I."/>
            <person name="Riley J.G."/>
            <person name="Joynt M."/>
            <person name="Yang X."/>
            <person name="Szarek W.A."/>
        </authorList>
    </citation>
    <scope>FUNCTION</scope>
    <scope>CATALYTIC ACTIVITY</scope>
    <source>
        <strain>O7:K1 / VW187</strain>
    </source>
</reference>
<evidence type="ECO:0000269" key="1">
    <source>
    </source>
</evidence>
<evidence type="ECO:0000269" key="2">
    <source>
    </source>
</evidence>
<evidence type="ECO:0000305" key="3"/>
<proteinExistence type="evidence at protein level"/>
<comment type="function">
    <text evidence="1 2">Catalyzes the addition of Gal, the second sugar moiety of the O7-antigen repeating unit, to GlcNAc-pyrophosphate-undecaprenol.</text>
</comment>
<comment type="catalytic activity">
    <reaction evidence="1 2">
        <text>N-acetyl-alpha-D-glucosaminyl-di-trans,octa-cis-undecaprenyl diphosphate + UDP-alpha-D-galactose = beta-D-Gal-(1-&gt;3)-alpha-D-GlcNAc-di-trans,octa-cis-undecaprenyl diphosphate + UDP + H(+)</text>
        <dbReference type="Rhea" id="RHEA:36747"/>
        <dbReference type="ChEBI" id="CHEBI:15378"/>
        <dbReference type="ChEBI" id="CHEBI:58223"/>
        <dbReference type="ChEBI" id="CHEBI:62959"/>
        <dbReference type="ChEBI" id="CHEBI:66914"/>
        <dbReference type="ChEBI" id="CHEBI:73973"/>
        <dbReference type="EC" id="2.4.1.303"/>
    </reaction>
</comment>
<comment type="cofactor">
    <cofactor evidence="1">
        <name>Mn(2+)</name>
        <dbReference type="ChEBI" id="CHEBI:29035"/>
    </cofactor>
    <text evidence="1">Mn(2+) ion. Can also use other divalent metal cations.</text>
</comment>
<comment type="biophysicochemical properties">
    <kinetics>
        <KM evidence="1">1.2 mM for UDP-Gal</KM>
        <KM evidence="1">0.08 mM for GlcNAc-PP-PhU</KM>
        <Vmax evidence="1">0.042 umol/min/mg enzyme toward UDP-Gal</Vmax>
        <Vmax evidence="1">0.027 umol/min/mg enzyme toward GlcNAc-PP-phenylundecyl</Vmax>
    </kinetics>
    <phDependence>
        <text evidence="1">Optimum pH is 7.</text>
    </phDependence>
</comment>
<comment type="pathway">
    <text evidence="1">Bacterial outer membrane biogenesis; LPS O-antigen biosynthesis.</text>
</comment>
<comment type="subcellular location">
    <subcellularLocation>
        <location evidence="1">Cell inner membrane</location>
        <topology evidence="1">Peripheral membrane protein</topology>
        <orientation evidence="1">Cytoplasmic side</orientation>
    </subcellularLocation>
</comment>
<comment type="similarity">
    <text evidence="3">Belongs to the glycosyltransferase 2 family.</text>
</comment>
<accession>Q03084</accession>
<sequence length="275" mass="31873">MSDDTPKFSVLMAIYIKDSPLFLSEALQSIYKNTVAPDEVIIIRDGKVTSELNSVIDSWRRYLNIKDFTLEKNMGLGAALNFGLNQCMHDLVIRADSDDINRTNRFECILDFMTKNGDVHILSSWVEEFEFNPGDKGIIKKVPSRNSILKYSKNRSPFNHPAVAFKKCEIMRVGGYGNEYLYEDYALWLKSLANGCNGDNIQQVLVDMRFSKETAKRRGGIKYAISEIKAQYHFYRANYISYQDFIINIITRIFVRLLPTSFRGYIYKKVIRRFL</sequence>
<protein>
    <recommendedName>
        <fullName>UDP-Gal:alpha-D-GlcNAc-diphosphoundecaprenol beta-1,3-galactosyltransferase</fullName>
        <ecNumber evidence="1 2">2.4.1.303</ecNumber>
    </recommendedName>
</protein>